<gene>
    <name evidence="1" type="primary">rihA</name>
    <name type="ordered locus">c0735</name>
</gene>
<accession>Q8FJY8</accession>
<protein>
    <recommendedName>
        <fullName evidence="1">Pyrimidine-specific ribonucleoside hydrolase RihA</fullName>
        <ecNumber evidence="1">3.2.-.-</ecNumber>
    </recommendedName>
    <alternativeName>
        <fullName evidence="1">Cytidine/uridine-specific hydrolase</fullName>
    </alternativeName>
</protein>
<dbReference type="EC" id="3.2.-.-" evidence="1"/>
<dbReference type="EMBL" id="AE014075">
    <property type="protein sequence ID" value="AAN79208.1"/>
    <property type="status" value="ALT_INIT"/>
    <property type="molecule type" value="Genomic_DNA"/>
</dbReference>
<dbReference type="RefSeq" id="WP_001207539.1">
    <property type="nucleotide sequence ID" value="NZ_CP051263.1"/>
</dbReference>
<dbReference type="SMR" id="Q8FJY8"/>
<dbReference type="STRING" id="199310.c0735"/>
<dbReference type="KEGG" id="ecc:c0735"/>
<dbReference type="eggNOG" id="COG1957">
    <property type="taxonomic scope" value="Bacteria"/>
</dbReference>
<dbReference type="HOGENOM" id="CLU_036838_2_0_6"/>
<dbReference type="Proteomes" id="UP000001410">
    <property type="component" value="Chromosome"/>
</dbReference>
<dbReference type="GO" id="GO:0005829">
    <property type="term" value="C:cytosol"/>
    <property type="evidence" value="ECO:0007669"/>
    <property type="project" value="TreeGrafter"/>
</dbReference>
<dbReference type="GO" id="GO:0008477">
    <property type="term" value="F:purine nucleosidase activity"/>
    <property type="evidence" value="ECO:0007669"/>
    <property type="project" value="TreeGrafter"/>
</dbReference>
<dbReference type="GO" id="GO:0045437">
    <property type="term" value="F:uridine nucleosidase activity"/>
    <property type="evidence" value="ECO:0007669"/>
    <property type="project" value="InterPro"/>
</dbReference>
<dbReference type="GO" id="GO:0015949">
    <property type="term" value="P:nucleobase-containing small molecule interconversion"/>
    <property type="evidence" value="ECO:0007669"/>
    <property type="project" value="InterPro"/>
</dbReference>
<dbReference type="GO" id="GO:0006152">
    <property type="term" value="P:purine nucleoside catabolic process"/>
    <property type="evidence" value="ECO:0007669"/>
    <property type="project" value="TreeGrafter"/>
</dbReference>
<dbReference type="GO" id="GO:0006206">
    <property type="term" value="P:pyrimidine nucleobase metabolic process"/>
    <property type="evidence" value="ECO:0007669"/>
    <property type="project" value="UniProtKB-UniRule"/>
</dbReference>
<dbReference type="CDD" id="cd02651">
    <property type="entry name" value="nuc_hydro_IU_UC_XIUA"/>
    <property type="match status" value="1"/>
</dbReference>
<dbReference type="FunFam" id="3.90.245.10:FF:000001">
    <property type="entry name" value="Pyrimidine-specific ribonucleoside hydrolase RihA"/>
    <property type="match status" value="1"/>
</dbReference>
<dbReference type="Gene3D" id="3.90.245.10">
    <property type="entry name" value="Ribonucleoside hydrolase-like"/>
    <property type="match status" value="1"/>
</dbReference>
<dbReference type="HAMAP" id="MF_01431">
    <property type="entry name" value="Pyrim_hydro_RihA"/>
    <property type="match status" value="1"/>
</dbReference>
<dbReference type="InterPro" id="IPR015910">
    <property type="entry name" value="I/U_nuclsd_hydro_CS"/>
</dbReference>
<dbReference type="InterPro" id="IPR001910">
    <property type="entry name" value="Inosine/uridine_hydrolase_dom"/>
</dbReference>
<dbReference type="InterPro" id="IPR023186">
    <property type="entry name" value="IUNH"/>
</dbReference>
<dbReference type="InterPro" id="IPR022975">
    <property type="entry name" value="Pyrim_hydro_RihA"/>
</dbReference>
<dbReference type="InterPro" id="IPR036452">
    <property type="entry name" value="Ribo_hydro-like"/>
</dbReference>
<dbReference type="NCBIfam" id="NF007761">
    <property type="entry name" value="PRK10443.1"/>
    <property type="match status" value="1"/>
</dbReference>
<dbReference type="PANTHER" id="PTHR12304">
    <property type="entry name" value="INOSINE-URIDINE PREFERRING NUCLEOSIDE HYDROLASE"/>
    <property type="match status" value="1"/>
</dbReference>
<dbReference type="PANTHER" id="PTHR12304:SF4">
    <property type="entry name" value="URIDINE NUCLEOSIDASE"/>
    <property type="match status" value="1"/>
</dbReference>
<dbReference type="Pfam" id="PF01156">
    <property type="entry name" value="IU_nuc_hydro"/>
    <property type="match status" value="1"/>
</dbReference>
<dbReference type="SUPFAM" id="SSF53590">
    <property type="entry name" value="Nucleoside hydrolase"/>
    <property type="match status" value="1"/>
</dbReference>
<dbReference type="PROSITE" id="PS01247">
    <property type="entry name" value="IUNH"/>
    <property type="match status" value="1"/>
</dbReference>
<feature type="chain" id="PRO_0000206815" description="Pyrimidine-specific ribonucleoside hydrolase RihA">
    <location>
        <begin position="1"/>
        <end position="311"/>
    </location>
</feature>
<feature type="active site" evidence="1">
    <location>
        <position position="240"/>
    </location>
</feature>
<evidence type="ECO:0000255" key="1">
    <source>
        <dbReference type="HAMAP-Rule" id="MF_01431"/>
    </source>
</evidence>
<evidence type="ECO:0000305" key="2"/>
<reference key="1">
    <citation type="journal article" date="2002" name="Proc. Natl. Acad. Sci. U.S.A.">
        <title>Extensive mosaic structure revealed by the complete genome sequence of uropathogenic Escherichia coli.</title>
        <authorList>
            <person name="Welch R.A."/>
            <person name="Burland V."/>
            <person name="Plunkett G. III"/>
            <person name="Redford P."/>
            <person name="Roesch P."/>
            <person name="Rasko D."/>
            <person name="Buckles E.L."/>
            <person name="Liou S.-R."/>
            <person name="Boutin A."/>
            <person name="Hackett J."/>
            <person name="Stroud D."/>
            <person name="Mayhew G.F."/>
            <person name="Rose D.J."/>
            <person name="Zhou S."/>
            <person name="Schwartz D.C."/>
            <person name="Perna N.T."/>
            <person name="Mobley H.L.T."/>
            <person name="Donnenberg M.S."/>
            <person name="Blattner F.R."/>
        </authorList>
    </citation>
    <scope>NUCLEOTIDE SEQUENCE [LARGE SCALE GENOMIC DNA]</scope>
    <source>
        <strain>CFT073 / ATCC 700928 / UPEC</strain>
    </source>
</reference>
<organism>
    <name type="scientific">Escherichia coli O6:H1 (strain CFT073 / ATCC 700928 / UPEC)</name>
    <dbReference type="NCBI Taxonomy" id="199310"/>
    <lineage>
        <taxon>Bacteria</taxon>
        <taxon>Pseudomonadati</taxon>
        <taxon>Pseudomonadota</taxon>
        <taxon>Gammaproteobacteria</taxon>
        <taxon>Enterobacterales</taxon>
        <taxon>Enterobacteriaceae</taxon>
        <taxon>Escherichia</taxon>
    </lineage>
</organism>
<sequence>MALPILLDCDPGHDDAIAIVLALASPELDVKAITSSAGNQTPEKTLRNVLRMLTLLNRTDIPVASGAVKPLMRNLIIADNVHGESGLDGPALPEPTFAPQNCTAVELMAKTLRESEEPVTIVSTGPQTNVALLLNSHPELHSKIARIVIMGGAMGLGNWTPAAEFNIYVDPEAAEIVFQSGIPVVMAGLDVTHKAQIHVEDTERFRAIGNPVSTIVAELLDFFLEYHKDEKWGFVGAPLHDPCTIAWLLKPELFTTVERWVGVETQGKYTQGMTVVDYYYLTGNKPNATVMVDVDRQGFVDLLADRLKFYA</sequence>
<proteinExistence type="inferred from homology"/>
<comment type="function">
    <text evidence="1">Hydrolyzes with equal efficiency cytidine or uridine to ribose and cytosine or uracil, respectively.</text>
</comment>
<comment type="similarity">
    <text evidence="1">Belongs to the IUNH family. RihA subfamily.</text>
</comment>
<comment type="sequence caution" evidence="2">
    <conflict type="erroneous initiation">
        <sequence resource="EMBL-CDS" id="AAN79208"/>
    </conflict>
</comment>
<name>RIHA_ECOL6</name>
<keyword id="KW-0326">Glycosidase</keyword>
<keyword id="KW-0378">Hydrolase</keyword>
<keyword id="KW-1185">Reference proteome</keyword>